<keyword id="KW-0053">Apoptosis</keyword>
<keyword id="KW-0202">Cytokine</keyword>
<keyword id="KW-1015">Disulfide bond</keyword>
<keyword id="KW-0325">Glycoprotein</keyword>
<keyword id="KW-1017">Isopeptide bond</keyword>
<keyword id="KW-1185">Reference proteome</keyword>
<keyword id="KW-0964">Secreted</keyword>
<keyword id="KW-0732">Signal</keyword>
<keyword id="KW-0832">Ubl conjugation</keyword>
<organism>
    <name type="scientific">Mus musculus</name>
    <name type="common">Mouse</name>
    <dbReference type="NCBI Taxonomy" id="10090"/>
    <lineage>
        <taxon>Eukaryota</taxon>
        <taxon>Metazoa</taxon>
        <taxon>Chordata</taxon>
        <taxon>Craniata</taxon>
        <taxon>Vertebrata</taxon>
        <taxon>Euteleostomi</taxon>
        <taxon>Mammalia</taxon>
        <taxon>Eutheria</taxon>
        <taxon>Euarchontoglires</taxon>
        <taxon>Glires</taxon>
        <taxon>Rodentia</taxon>
        <taxon>Myomorpha</taxon>
        <taxon>Muroidea</taxon>
        <taxon>Muridae</taxon>
        <taxon>Murinae</taxon>
        <taxon>Mus</taxon>
        <taxon>Mus</taxon>
    </lineage>
</organism>
<accession>Q925S4</accession>
<accession>Q925J3</accession>
<gene>
    <name type="primary">Il24</name>
    <name type="synonym">Mda7</name>
</gene>
<proteinExistence type="evidence at transcript level"/>
<name>IL24_MOUSE</name>
<feature type="signal peptide" evidence="2">
    <location>
        <begin position="1"/>
        <end position="26"/>
    </location>
</feature>
<feature type="chain" id="PRO_0000042240" description="Interleukin-24">
    <location>
        <begin position="27"/>
        <end position="181"/>
    </location>
</feature>
<feature type="glycosylation site" description="N-linked (GlcNAc...) asparagine" evidence="2">
    <location>
        <position position="74"/>
    </location>
</feature>
<feature type="disulfide bond" evidence="1">
    <location>
        <begin position="34"/>
        <end position="81"/>
    </location>
</feature>
<feature type="cross-link" description="Glycyl lysine isopeptide (Lys-Gly) (interchain with G-Cter in ubiquitin)" evidence="1">
    <location>
        <position position="97"/>
    </location>
</feature>
<feature type="sequence conflict" description="In Ref. 2; AAK52470." evidence="6" ref="2">
    <original>S</original>
    <variation>F</variation>
    <location>
        <position position="31"/>
    </location>
</feature>
<comment type="function">
    <text evidence="1 4 5">Multifunctional cytokine mainly produced by T-cells that plays a regulatory role in immune response, tissue homeostasis, host defense, and oncogenesis (PubMed:31907348, PubMed:35148201). Possesses antiviral functions and induces the type I interferon response during influenza infection. Signals through two receptor complexes IL20RA/IL20RB or IL20RB/IL22RA1. In turn, stimulates the JAK1-STAT3 and MAPK pathways and promotes the secretion of pro-inflammatory mediators including IL8 and MMP1 (By similarity). Intracellularly, maintains endoplasmic reticulum homeostasis by restricting the eIF2alpha-CHOP pathway-mediated stress signal (PubMed:31907348). In addition, acts as a quality control mechanism for the ubiquitin proteasome system by alerting the cell to proteasome dysfunction through activation of PKR/EIF2AK2 (PubMed:35148201).</text>
</comment>
<comment type="subcellular location">
    <subcellularLocation>
        <location evidence="1">Secreted</location>
    </subcellularLocation>
</comment>
<comment type="tissue specificity">
    <text evidence="3 4">Selectively expressed by Th2 cells (PubMed:11342597). Expressed in the liver (PubMed:31907348).</text>
</comment>
<comment type="induction">
    <text evidence="3">By IL4.</text>
</comment>
<comment type="PTM">
    <text evidence="1">Glycosylated.</text>
</comment>
<comment type="PTM">
    <text evidence="1">Ubiquitination at Lys-97 promotes proteasomal degradation.</text>
</comment>
<comment type="disruption phenotype">
    <text evidence="4">IL24-deficient mice are more sensitive to CCL4-induced liver injury than WT counterparts.</text>
</comment>
<comment type="similarity">
    <text evidence="6">Belongs to the IL-10 family.</text>
</comment>
<comment type="sequence caution" evidence="6">
    <conflict type="erroneous initiation">
        <sequence resource="EMBL-CDS" id="AAK52470"/>
    </conflict>
</comment>
<evidence type="ECO:0000250" key="1">
    <source>
        <dbReference type="UniProtKB" id="Q13007"/>
    </source>
</evidence>
<evidence type="ECO:0000255" key="2"/>
<evidence type="ECO:0000269" key="3">
    <source>
    </source>
</evidence>
<evidence type="ECO:0000269" key="4">
    <source>
    </source>
</evidence>
<evidence type="ECO:0000269" key="5">
    <source>
    </source>
</evidence>
<evidence type="ECO:0000305" key="6"/>
<sequence length="181" mass="20812">MSWGLQILPCLSLILLLWNQVPGLEGQEFRSGSCQVTGVVLPELWEAFWTVKNTVQTQDDITSIRLLKPQVLRNVSGAESCYLAHSLLKFYLNTVFKNYHSKIAKFKVLRSFSTLANNFIVIMSQLQPSKDNSMLPISESAHQRFLLFRRAFKQLDTEVALVKAFGEVDILLTWMQKFYHL</sequence>
<dbReference type="EMBL" id="AF235006">
    <property type="protein sequence ID" value="AAK52590.1"/>
    <property type="molecule type" value="mRNA"/>
</dbReference>
<dbReference type="EMBL" id="AF333251">
    <property type="protein sequence ID" value="AAK52470.1"/>
    <property type="status" value="ALT_INIT"/>
    <property type="molecule type" value="mRNA"/>
</dbReference>
<dbReference type="CCDS" id="CCDS15262.2"/>
<dbReference type="RefSeq" id="NP_444325.2">
    <property type="nucleotide sequence ID" value="NM_053095.2"/>
</dbReference>
<dbReference type="SMR" id="Q925S4"/>
<dbReference type="FunCoup" id="Q925S4">
    <property type="interactions" value="735"/>
</dbReference>
<dbReference type="STRING" id="10090.ENSMUSP00000113064"/>
<dbReference type="GlyCosmos" id="Q925S4">
    <property type="glycosylation" value="1 site, No reported glycans"/>
</dbReference>
<dbReference type="GlyGen" id="Q925S4">
    <property type="glycosylation" value="1 site"/>
</dbReference>
<dbReference type="iPTMnet" id="Q925S4"/>
<dbReference type="PhosphoSitePlus" id="Q925S4"/>
<dbReference type="PaxDb" id="10090-ENSMUSP00000113064"/>
<dbReference type="DNASU" id="93672"/>
<dbReference type="GeneID" id="93672"/>
<dbReference type="KEGG" id="mmu:93672"/>
<dbReference type="AGR" id="MGI:2135548"/>
<dbReference type="CTD" id="11009"/>
<dbReference type="MGI" id="MGI:2135548">
    <property type="gene designation" value="Il24"/>
</dbReference>
<dbReference type="eggNOG" id="ENOG502SUXZ">
    <property type="taxonomic scope" value="Eukaryota"/>
</dbReference>
<dbReference type="InParanoid" id="Q925S4"/>
<dbReference type="PhylomeDB" id="Q925S4"/>
<dbReference type="TreeFam" id="TF333253"/>
<dbReference type="Reactome" id="R-MMU-8854691">
    <property type="pathway name" value="Interleukin-20 family signaling"/>
</dbReference>
<dbReference type="BioGRID-ORCS" id="93672">
    <property type="hits" value="0 hits in 78 CRISPR screens"/>
</dbReference>
<dbReference type="PRO" id="PR:Q925S4"/>
<dbReference type="Proteomes" id="UP000000589">
    <property type="component" value="Unplaced"/>
</dbReference>
<dbReference type="RNAct" id="Q925S4">
    <property type="molecule type" value="protein"/>
</dbReference>
<dbReference type="GO" id="GO:0005576">
    <property type="term" value="C:extracellular region"/>
    <property type="evidence" value="ECO:0000314"/>
    <property type="project" value="MGI"/>
</dbReference>
<dbReference type="GO" id="GO:0005615">
    <property type="term" value="C:extracellular space"/>
    <property type="evidence" value="ECO:0000314"/>
    <property type="project" value="MGI"/>
</dbReference>
<dbReference type="GO" id="GO:0005125">
    <property type="term" value="F:cytokine activity"/>
    <property type="evidence" value="ECO:0000247"/>
    <property type="project" value="MGI"/>
</dbReference>
<dbReference type="GO" id="GO:0006915">
    <property type="term" value="P:apoptotic process"/>
    <property type="evidence" value="ECO:0007669"/>
    <property type="project" value="UniProtKB-KW"/>
</dbReference>
<dbReference type="GO" id="GO:0008285">
    <property type="term" value="P:negative regulation of cell population proliferation"/>
    <property type="evidence" value="ECO:0000314"/>
    <property type="project" value="MGI"/>
</dbReference>
<dbReference type="GO" id="GO:0043065">
    <property type="term" value="P:positive regulation of apoptotic process"/>
    <property type="evidence" value="ECO:0000314"/>
    <property type="project" value="MGI"/>
</dbReference>
<dbReference type="FunFam" id="1.20.1250.10:FF:000038">
    <property type="entry name" value="Interleukin 24"/>
    <property type="match status" value="1"/>
</dbReference>
<dbReference type="Gene3D" id="1.20.1250.10">
    <property type="match status" value="1"/>
</dbReference>
<dbReference type="InterPro" id="IPR009079">
    <property type="entry name" value="4_helix_cytokine-like_core"/>
</dbReference>
<dbReference type="InterPro" id="IPR020443">
    <property type="entry name" value="IL-10/19/20/24/26"/>
</dbReference>
<dbReference type="InterPro" id="IPR020423">
    <property type="entry name" value="IL-10_CS"/>
</dbReference>
<dbReference type="InterPro" id="IPR020444">
    <property type="entry name" value="IL-24"/>
</dbReference>
<dbReference type="PANTHER" id="PTHR48482">
    <property type="entry name" value="INTERLEUKIN-19-RELATED"/>
    <property type="match status" value="1"/>
</dbReference>
<dbReference type="PANTHER" id="PTHR48482:SF4">
    <property type="entry name" value="INTERLEUKIN-24"/>
    <property type="match status" value="1"/>
</dbReference>
<dbReference type="Pfam" id="PF00726">
    <property type="entry name" value="IL10"/>
    <property type="match status" value="1"/>
</dbReference>
<dbReference type="PRINTS" id="PR01937">
    <property type="entry name" value="INTRLEUKIN24"/>
</dbReference>
<dbReference type="SUPFAM" id="SSF47266">
    <property type="entry name" value="4-helical cytokines"/>
    <property type="match status" value="1"/>
</dbReference>
<dbReference type="PROSITE" id="PS00520">
    <property type="entry name" value="INTERLEUKIN_10"/>
    <property type="match status" value="1"/>
</dbReference>
<protein>
    <recommendedName>
        <fullName>Interleukin-24</fullName>
        <shortName>IL-24</shortName>
    </recommendedName>
    <alternativeName>
        <fullName>IL-4-induced secreted protein</fullName>
    </alternativeName>
    <alternativeName>
        <fullName>Melanoma differentiation-associated gene 7 protein</fullName>
        <shortName>MDA-7</shortName>
    </alternativeName>
    <alternativeName>
        <fullName>Th2-specific cytokine FISP</fullName>
    </alternativeName>
</protein>
<reference key="1">
    <citation type="submission" date="2000-02" db="EMBL/GenBank/DDBJ databases">
        <title>Genomic structure, chromosomal localization and expression of melanoma differentiation associated gene-7 (mda-7): potential relationship with cellular senescence.</title>
        <authorList>
            <person name="Madireddi M.T."/>
            <person name="Lin J."/>
            <person name="Su Z.-Z."/>
            <person name="Shay J.W."/>
            <person name="Huberman E."/>
            <person name="Fisher P.B."/>
        </authorList>
    </citation>
    <scope>NUCLEOTIDE SEQUENCE [MRNA]</scope>
    <source>
        <strain>129/SvJ</strain>
    </source>
</reference>
<reference key="2">
    <citation type="journal article" date="2001" name="J. Immunol.">
        <title>FISP (IL-4-induced secreted protein), a novel cytokine-like molecule secreted by Th2 cells.</title>
        <authorList>
            <person name="Schaefer G."/>
            <person name="Venkataraman C."/>
            <person name="Schindler U."/>
        </authorList>
    </citation>
    <scope>NUCLEOTIDE SEQUENCE [MRNA]</scope>
    <scope>TISSUE SPECIFICITY</scope>
    <scope>INDUCTION</scope>
    <source>
        <strain>BALB/cJ</strain>
    </source>
</reference>
<reference key="3">
    <citation type="journal article" date="2020" name="Cell Death Dis.">
        <title>Intracellular XBP1-IL-24 axis dismantles cytotoxic unfolded protein response in the liver.</title>
        <authorList>
            <person name="Wang J."/>
            <person name="Hu B."/>
            <person name="Zhao Z."/>
            <person name="Zhang H."/>
            <person name="Zhang H."/>
            <person name="Zhao Z."/>
            <person name="Ma X."/>
            <person name="Shen B."/>
            <person name="Sun B."/>
            <person name="Huang X."/>
            <person name="Hou J."/>
            <person name="Xia Q."/>
        </authorList>
    </citation>
    <scope>FUNCTION</scope>
    <scope>DISRUPTION PHENOTYPE</scope>
    <scope>TISSUE SPECIFICITY</scope>
</reference>
<reference key="4">
    <citation type="journal article" date="2022" name="Sci. Immunol.">
        <title>Protein kinase R is an innate immune sensor of proteotoxic stress via accumulation of cytoplasmic IL-24.</title>
        <authorList>
            <person name="Davidson S."/>
            <person name="Yu C.H."/>
            <person name="Steiner A."/>
            <person name="Ebstein F."/>
            <person name="Baker P.J."/>
            <person name="Jarur-Chamy V."/>
            <person name="Hrovat Schaale K."/>
            <person name="Laohamonthonkul P."/>
            <person name="Kong K."/>
            <person name="Calleja D.J."/>
            <person name="Harapas C.R."/>
            <person name="Balka K.R."/>
            <person name="Mitchell J."/>
            <person name="Jackson J.T."/>
            <person name="Geoghegan N.D."/>
            <person name="Moghaddas F."/>
            <person name="Rogers K.L."/>
            <person name="Mayer-Barber K.D."/>
            <person name="De Jesus A.A."/>
            <person name="De Nardo D."/>
            <person name="Kile B.T."/>
            <person name="Sadler A.J."/>
            <person name="Poli M.C."/>
            <person name="Krueger E."/>
            <person name="Goldbach Mansky R."/>
            <person name="Masters S.L."/>
        </authorList>
    </citation>
    <scope>FUNCTION</scope>
    <scope>DISRUPTION PHENOTYPE</scope>
</reference>